<sequence>MERYENLFAQLNVRREGAFVPFVTLGDPGIEQSLKIIDTLIDAGADALELGVPFSDPLADGPTIQNANLRAFAAGVTPTQCFEMLALIREKHPTIPIGLLMYANLVFNNGIDAFYAHCEKVGVDSVLVADVPVEESAPFRQAALRHNIAPIFICPPNADDDLLRQIASYGRGYTYLLSRSGVTGAENRGALPLHHLIEKLKEYHAAPALQGFGISSPVQVSAAVRAGAAGAISGSAIVNIIEKNHNTSPDQMLAELKSFVYAMKAASRV</sequence>
<proteinExistence type="inferred from homology"/>
<reference key="1">
    <citation type="submission" date="2007-11" db="EMBL/GenBank/DDBJ databases">
        <authorList>
            <consortium name="The Salmonella enterica serovar Arizonae Genome Sequencing Project"/>
            <person name="McClelland M."/>
            <person name="Sanderson E.K."/>
            <person name="Porwollik S."/>
            <person name="Spieth J."/>
            <person name="Clifton W.S."/>
            <person name="Fulton R."/>
            <person name="Chunyan W."/>
            <person name="Wollam A."/>
            <person name="Shah N."/>
            <person name="Pepin K."/>
            <person name="Bhonagiri V."/>
            <person name="Nash W."/>
            <person name="Johnson M."/>
            <person name="Thiruvilangam P."/>
            <person name="Wilson R."/>
        </authorList>
    </citation>
    <scope>NUCLEOTIDE SEQUENCE [LARGE SCALE GENOMIC DNA]</scope>
    <source>
        <strain>ATCC BAA-731 / CDC346-86 / RSK2980</strain>
    </source>
</reference>
<gene>
    <name evidence="1" type="primary">trpA</name>
    <name type="ordered locus">SARI_01228</name>
</gene>
<feature type="chain" id="PRO_1000076366" description="Tryptophan synthase alpha chain">
    <location>
        <begin position="1"/>
        <end position="269"/>
    </location>
</feature>
<feature type="active site" description="Proton acceptor" evidence="1">
    <location>
        <position position="49"/>
    </location>
</feature>
<feature type="active site" description="Proton acceptor" evidence="1">
    <location>
        <position position="60"/>
    </location>
</feature>
<organism>
    <name type="scientific">Salmonella arizonae (strain ATCC BAA-731 / CDC346-86 / RSK2980)</name>
    <dbReference type="NCBI Taxonomy" id="41514"/>
    <lineage>
        <taxon>Bacteria</taxon>
        <taxon>Pseudomonadati</taxon>
        <taxon>Pseudomonadota</taxon>
        <taxon>Gammaproteobacteria</taxon>
        <taxon>Enterobacterales</taxon>
        <taxon>Enterobacteriaceae</taxon>
        <taxon>Salmonella</taxon>
    </lineage>
</organism>
<protein>
    <recommendedName>
        <fullName evidence="1">Tryptophan synthase alpha chain</fullName>
        <ecNumber evidence="1">4.2.1.20</ecNumber>
    </recommendedName>
</protein>
<dbReference type="EC" id="4.2.1.20" evidence="1"/>
<dbReference type="EMBL" id="CP000880">
    <property type="protein sequence ID" value="ABX21130.1"/>
    <property type="molecule type" value="Genomic_DNA"/>
</dbReference>
<dbReference type="SMR" id="A9MPY6"/>
<dbReference type="STRING" id="41514.SARI_01228"/>
<dbReference type="KEGG" id="ses:SARI_01228"/>
<dbReference type="HOGENOM" id="CLU_016734_0_4_6"/>
<dbReference type="UniPathway" id="UPA00035">
    <property type="reaction ID" value="UER00044"/>
</dbReference>
<dbReference type="Proteomes" id="UP000002084">
    <property type="component" value="Chromosome"/>
</dbReference>
<dbReference type="GO" id="GO:0005829">
    <property type="term" value="C:cytosol"/>
    <property type="evidence" value="ECO:0007669"/>
    <property type="project" value="TreeGrafter"/>
</dbReference>
<dbReference type="GO" id="GO:0004834">
    <property type="term" value="F:tryptophan synthase activity"/>
    <property type="evidence" value="ECO:0007669"/>
    <property type="project" value="UniProtKB-UniRule"/>
</dbReference>
<dbReference type="CDD" id="cd04724">
    <property type="entry name" value="Tryptophan_synthase_alpha"/>
    <property type="match status" value="1"/>
</dbReference>
<dbReference type="FunFam" id="3.20.20.70:FF:000037">
    <property type="entry name" value="Tryptophan synthase alpha chain"/>
    <property type="match status" value="1"/>
</dbReference>
<dbReference type="Gene3D" id="3.20.20.70">
    <property type="entry name" value="Aldolase class I"/>
    <property type="match status" value="1"/>
</dbReference>
<dbReference type="HAMAP" id="MF_00131">
    <property type="entry name" value="Trp_synth_alpha"/>
    <property type="match status" value="1"/>
</dbReference>
<dbReference type="InterPro" id="IPR013785">
    <property type="entry name" value="Aldolase_TIM"/>
</dbReference>
<dbReference type="InterPro" id="IPR011060">
    <property type="entry name" value="RibuloseP-bd_barrel"/>
</dbReference>
<dbReference type="InterPro" id="IPR018204">
    <property type="entry name" value="Trp_synthase_alpha_AS"/>
</dbReference>
<dbReference type="InterPro" id="IPR002028">
    <property type="entry name" value="Trp_synthase_suA"/>
</dbReference>
<dbReference type="NCBIfam" id="TIGR00262">
    <property type="entry name" value="trpA"/>
    <property type="match status" value="1"/>
</dbReference>
<dbReference type="PANTHER" id="PTHR43406:SF1">
    <property type="entry name" value="TRYPTOPHAN SYNTHASE ALPHA CHAIN, CHLOROPLASTIC"/>
    <property type="match status" value="1"/>
</dbReference>
<dbReference type="PANTHER" id="PTHR43406">
    <property type="entry name" value="TRYPTOPHAN SYNTHASE, ALPHA CHAIN"/>
    <property type="match status" value="1"/>
</dbReference>
<dbReference type="Pfam" id="PF00290">
    <property type="entry name" value="Trp_syntA"/>
    <property type="match status" value="1"/>
</dbReference>
<dbReference type="SUPFAM" id="SSF51366">
    <property type="entry name" value="Ribulose-phoshate binding barrel"/>
    <property type="match status" value="1"/>
</dbReference>
<dbReference type="PROSITE" id="PS00167">
    <property type="entry name" value="TRP_SYNTHASE_ALPHA"/>
    <property type="match status" value="1"/>
</dbReference>
<name>TRPA_SALAR</name>
<comment type="function">
    <text evidence="1">The alpha subunit is responsible for the aldol cleavage of indoleglycerol phosphate to indole and glyceraldehyde 3-phosphate.</text>
</comment>
<comment type="catalytic activity">
    <reaction evidence="1">
        <text>(1S,2R)-1-C-(indol-3-yl)glycerol 3-phosphate + L-serine = D-glyceraldehyde 3-phosphate + L-tryptophan + H2O</text>
        <dbReference type="Rhea" id="RHEA:10532"/>
        <dbReference type="ChEBI" id="CHEBI:15377"/>
        <dbReference type="ChEBI" id="CHEBI:33384"/>
        <dbReference type="ChEBI" id="CHEBI:57912"/>
        <dbReference type="ChEBI" id="CHEBI:58866"/>
        <dbReference type="ChEBI" id="CHEBI:59776"/>
        <dbReference type="EC" id="4.2.1.20"/>
    </reaction>
</comment>
<comment type="pathway">
    <text evidence="1">Amino-acid biosynthesis; L-tryptophan biosynthesis; L-tryptophan from chorismate: step 5/5.</text>
</comment>
<comment type="subunit">
    <text evidence="1">Tetramer of two alpha and two beta chains.</text>
</comment>
<comment type="similarity">
    <text evidence="1">Belongs to the TrpA family.</text>
</comment>
<keyword id="KW-0028">Amino-acid biosynthesis</keyword>
<keyword id="KW-0057">Aromatic amino acid biosynthesis</keyword>
<keyword id="KW-0456">Lyase</keyword>
<keyword id="KW-1185">Reference proteome</keyword>
<keyword id="KW-0822">Tryptophan biosynthesis</keyword>
<accession>A9MPY6</accession>
<evidence type="ECO:0000255" key="1">
    <source>
        <dbReference type="HAMAP-Rule" id="MF_00131"/>
    </source>
</evidence>